<accession>Q9LYC5</accession>
<accession>C1JGP9</accession>
<sequence length="102" mass="11283">MDKVMRMSSEKGVVIFTKSSCCLCYAVQILFRDLRVQPTIHEIDNDPDCREIEKALVRLGCANAVPAVFVSGKLVGSTNDVMSLHLSGSLVPLIKPYQSFHN</sequence>
<feature type="chain" id="PRO_0000268721" description="Glutaredoxin-C14">
    <location>
        <begin position="1"/>
        <end position="102"/>
    </location>
</feature>
<feature type="domain" description="Glutaredoxin" evidence="2">
    <location>
        <begin position="1"/>
        <end position="101"/>
    </location>
</feature>
<feature type="disulfide bond" description="Redox-active" evidence="1">
    <location>
        <begin position="21"/>
        <end position="24"/>
    </location>
</feature>
<comment type="function">
    <text evidence="1">Has a glutathione-disulfide oxidoreductase activity in the presence of NADPH and glutathione reductase. Reduces low molecular weight disulfides and proteins (By similarity).</text>
</comment>
<comment type="subcellular location">
    <subcellularLocation>
        <location evidence="1">Cytoplasm</location>
    </subcellularLocation>
</comment>
<comment type="similarity">
    <text evidence="3">Belongs to the glutaredoxin family. CC-type subfamily.</text>
</comment>
<gene>
    <name type="primary">GRXC14</name>
    <name type="synonym">ROXY8</name>
    <name type="ordered locus">At3g62960</name>
    <name type="ORF">T20O10.60</name>
</gene>
<name>GRC14_ARATH</name>
<protein>
    <recommendedName>
        <fullName>Glutaredoxin-C14</fullName>
        <shortName>AtGrxC14</shortName>
    </recommendedName>
    <alternativeName>
        <fullName>Protein ROXY 8</fullName>
    </alternativeName>
</protein>
<evidence type="ECO:0000250" key="1"/>
<evidence type="ECO:0000255" key="2">
    <source>
        <dbReference type="PROSITE-ProRule" id="PRU00686"/>
    </source>
</evidence>
<evidence type="ECO:0000305" key="3"/>
<keyword id="KW-0963">Cytoplasm</keyword>
<keyword id="KW-1015">Disulfide bond</keyword>
<keyword id="KW-0249">Electron transport</keyword>
<keyword id="KW-0676">Redox-active center</keyword>
<keyword id="KW-1185">Reference proteome</keyword>
<keyword id="KW-0813">Transport</keyword>
<proteinExistence type="inferred from homology"/>
<reference key="1">
    <citation type="journal article" date="2009" name="Plant Cell">
        <title>Nuclear activity of ROXY1, a glutaredoxin interacting with TGA factors, is required for petal development in Arabidopsis thaliana.</title>
        <authorList>
            <person name="Li S."/>
            <person name="Lauri A."/>
            <person name="Ziemann M."/>
            <person name="Busch A."/>
            <person name="Bhave M."/>
            <person name="Zachgo S."/>
        </authorList>
    </citation>
    <scope>NUCLEOTIDE SEQUENCE [MRNA]</scope>
    <scope>GENE FAMILY</scope>
</reference>
<reference key="2">
    <citation type="journal article" date="2000" name="Nature">
        <title>Sequence and analysis of chromosome 3 of the plant Arabidopsis thaliana.</title>
        <authorList>
            <person name="Salanoubat M."/>
            <person name="Lemcke K."/>
            <person name="Rieger M."/>
            <person name="Ansorge W."/>
            <person name="Unseld M."/>
            <person name="Fartmann B."/>
            <person name="Valle G."/>
            <person name="Bloecker H."/>
            <person name="Perez-Alonso M."/>
            <person name="Obermaier B."/>
            <person name="Delseny M."/>
            <person name="Boutry M."/>
            <person name="Grivell L.A."/>
            <person name="Mache R."/>
            <person name="Puigdomenech P."/>
            <person name="De Simone V."/>
            <person name="Choisne N."/>
            <person name="Artiguenave F."/>
            <person name="Robert C."/>
            <person name="Brottier P."/>
            <person name="Wincker P."/>
            <person name="Cattolico L."/>
            <person name="Weissenbach J."/>
            <person name="Saurin W."/>
            <person name="Quetier F."/>
            <person name="Schaefer M."/>
            <person name="Mueller-Auer S."/>
            <person name="Gabel C."/>
            <person name="Fuchs M."/>
            <person name="Benes V."/>
            <person name="Wurmbach E."/>
            <person name="Drzonek H."/>
            <person name="Erfle H."/>
            <person name="Jordan N."/>
            <person name="Bangert S."/>
            <person name="Wiedelmann R."/>
            <person name="Kranz H."/>
            <person name="Voss H."/>
            <person name="Holland R."/>
            <person name="Brandt P."/>
            <person name="Nyakatura G."/>
            <person name="Vezzi A."/>
            <person name="D'Angelo M."/>
            <person name="Pallavicini A."/>
            <person name="Toppo S."/>
            <person name="Simionati B."/>
            <person name="Conrad A."/>
            <person name="Hornischer K."/>
            <person name="Kauer G."/>
            <person name="Loehnert T.-H."/>
            <person name="Nordsiek G."/>
            <person name="Reichelt J."/>
            <person name="Scharfe M."/>
            <person name="Schoen O."/>
            <person name="Bargues M."/>
            <person name="Terol J."/>
            <person name="Climent J."/>
            <person name="Navarro P."/>
            <person name="Collado C."/>
            <person name="Perez-Perez A."/>
            <person name="Ottenwaelder B."/>
            <person name="Duchemin D."/>
            <person name="Cooke R."/>
            <person name="Laudie M."/>
            <person name="Berger-Llauro C."/>
            <person name="Purnelle B."/>
            <person name="Masuy D."/>
            <person name="de Haan M."/>
            <person name="Maarse A.C."/>
            <person name="Alcaraz J.-P."/>
            <person name="Cottet A."/>
            <person name="Casacuberta E."/>
            <person name="Monfort A."/>
            <person name="Argiriou A."/>
            <person name="Flores M."/>
            <person name="Liguori R."/>
            <person name="Vitale D."/>
            <person name="Mannhaupt G."/>
            <person name="Haase D."/>
            <person name="Schoof H."/>
            <person name="Rudd S."/>
            <person name="Zaccaria P."/>
            <person name="Mewes H.-W."/>
            <person name="Mayer K.F.X."/>
            <person name="Kaul S."/>
            <person name="Town C.D."/>
            <person name="Koo H.L."/>
            <person name="Tallon L.J."/>
            <person name="Jenkins J."/>
            <person name="Rooney T."/>
            <person name="Rizzo M."/>
            <person name="Walts A."/>
            <person name="Utterback T."/>
            <person name="Fujii C.Y."/>
            <person name="Shea T.P."/>
            <person name="Creasy T.H."/>
            <person name="Haas B."/>
            <person name="Maiti R."/>
            <person name="Wu D."/>
            <person name="Peterson J."/>
            <person name="Van Aken S."/>
            <person name="Pai G."/>
            <person name="Militscher J."/>
            <person name="Sellers P."/>
            <person name="Gill J.E."/>
            <person name="Feldblyum T.V."/>
            <person name="Preuss D."/>
            <person name="Lin X."/>
            <person name="Nierman W.C."/>
            <person name="Salzberg S.L."/>
            <person name="White O."/>
            <person name="Venter J.C."/>
            <person name="Fraser C.M."/>
            <person name="Kaneko T."/>
            <person name="Nakamura Y."/>
            <person name="Sato S."/>
            <person name="Kato T."/>
            <person name="Asamizu E."/>
            <person name="Sasamoto S."/>
            <person name="Kimura T."/>
            <person name="Idesawa K."/>
            <person name="Kawashima K."/>
            <person name="Kishida Y."/>
            <person name="Kiyokawa C."/>
            <person name="Kohara M."/>
            <person name="Matsumoto M."/>
            <person name="Matsuno A."/>
            <person name="Muraki A."/>
            <person name="Nakayama S."/>
            <person name="Nakazaki N."/>
            <person name="Shinpo S."/>
            <person name="Takeuchi C."/>
            <person name="Wada T."/>
            <person name="Watanabe A."/>
            <person name="Yamada M."/>
            <person name="Yasuda M."/>
            <person name="Tabata S."/>
        </authorList>
    </citation>
    <scope>NUCLEOTIDE SEQUENCE [LARGE SCALE GENOMIC DNA]</scope>
    <source>
        <strain>cv. Columbia</strain>
    </source>
</reference>
<reference key="3">
    <citation type="journal article" date="2017" name="Plant J.">
        <title>Araport11: a complete reannotation of the Arabidopsis thaliana reference genome.</title>
        <authorList>
            <person name="Cheng C.Y."/>
            <person name="Krishnakumar V."/>
            <person name="Chan A.P."/>
            <person name="Thibaud-Nissen F."/>
            <person name="Schobel S."/>
            <person name="Town C.D."/>
        </authorList>
    </citation>
    <scope>GENOME REANNOTATION</scope>
    <source>
        <strain>cv. Columbia</strain>
    </source>
</reference>
<reference key="4">
    <citation type="submission" date="2006-02" db="EMBL/GenBank/DDBJ databases">
        <title>Arabidopsis ORF clones.</title>
        <authorList>
            <person name="Shinn P."/>
            <person name="Chen H."/>
            <person name="Kim C.J."/>
            <person name="Ecker J.R."/>
        </authorList>
    </citation>
    <scope>NUCLEOTIDE SEQUENCE [LARGE SCALE MRNA]</scope>
    <source>
        <strain>cv. Columbia</strain>
    </source>
</reference>
<reference key="5">
    <citation type="journal article" date="2004" name="Cell. Mol. Life Sci.">
        <title>Plant glutaredoxins: still mysterious reducing systems.</title>
        <authorList>
            <person name="Rouhier N."/>
            <person name="Gelhaye E."/>
            <person name="Jacquot J.-P."/>
        </authorList>
    </citation>
    <scope>GENE FAMILY</scope>
    <scope>NOMENCLATURE</scope>
</reference>
<reference key="6">
    <citation type="journal article" date="2006" name="J. Exp. Bot.">
        <title>Genome-wide analysis of plant glutaredoxin systems.</title>
        <authorList>
            <person name="Rouhier N."/>
            <person name="Couturier J."/>
            <person name="Jacquot J.-P."/>
        </authorList>
    </citation>
    <scope>GENE FAMILY</scope>
</reference>
<organism>
    <name type="scientific">Arabidopsis thaliana</name>
    <name type="common">Mouse-ear cress</name>
    <dbReference type="NCBI Taxonomy" id="3702"/>
    <lineage>
        <taxon>Eukaryota</taxon>
        <taxon>Viridiplantae</taxon>
        <taxon>Streptophyta</taxon>
        <taxon>Embryophyta</taxon>
        <taxon>Tracheophyta</taxon>
        <taxon>Spermatophyta</taxon>
        <taxon>Magnoliopsida</taxon>
        <taxon>eudicotyledons</taxon>
        <taxon>Gunneridae</taxon>
        <taxon>Pentapetalae</taxon>
        <taxon>rosids</taxon>
        <taxon>malvids</taxon>
        <taxon>Brassicales</taxon>
        <taxon>Brassicaceae</taxon>
        <taxon>Camelineae</taxon>
        <taxon>Arabidopsis</taxon>
    </lineage>
</organism>
<dbReference type="EMBL" id="FJ611908">
    <property type="protein sequence ID" value="ACO50413.1"/>
    <property type="molecule type" value="mRNA"/>
</dbReference>
<dbReference type="EMBL" id="AL163816">
    <property type="protein sequence ID" value="CAB87741.1"/>
    <property type="molecule type" value="Genomic_DNA"/>
</dbReference>
<dbReference type="EMBL" id="CP002686">
    <property type="protein sequence ID" value="AEE80417.1"/>
    <property type="molecule type" value="Genomic_DNA"/>
</dbReference>
<dbReference type="EMBL" id="BT024662">
    <property type="protein sequence ID" value="ABD57487.1"/>
    <property type="molecule type" value="mRNA"/>
</dbReference>
<dbReference type="PIR" id="T48085">
    <property type="entry name" value="T48085"/>
</dbReference>
<dbReference type="RefSeq" id="NP_191855.1">
    <property type="nucleotide sequence ID" value="NM_116161.3"/>
</dbReference>
<dbReference type="SMR" id="Q9LYC5"/>
<dbReference type="BioGRID" id="10785">
    <property type="interactions" value="6"/>
</dbReference>
<dbReference type="FunCoup" id="Q9LYC5">
    <property type="interactions" value="32"/>
</dbReference>
<dbReference type="STRING" id="3702.Q9LYC5"/>
<dbReference type="PaxDb" id="3702-AT3G62960.1"/>
<dbReference type="ProteomicsDB" id="220594"/>
<dbReference type="EnsemblPlants" id="AT3G62960.1">
    <property type="protein sequence ID" value="AT3G62960.1"/>
    <property type="gene ID" value="AT3G62960"/>
</dbReference>
<dbReference type="GeneID" id="825471"/>
<dbReference type="Gramene" id="AT3G62960.1">
    <property type="protein sequence ID" value="AT3G62960.1"/>
    <property type="gene ID" value="AT3G62960"/>
</dbReference>
<dbReference type="KEGG" id="ath:AT3G62960"/>
<dbReference type="Araport" id="AT3G62960"/>
<dbReference type="TAIR" id="AT3G62960">
    <property type="gene designation" value="ROXY8"/>
</dbReference>
<dbReference type="eggNOG" id="KOG1752">
    <property type="taxonomic scope" value="Eukaryota"/>
</dbReference>
<dbReference type="HOGENOM" id="CLU_026126_6_0_1"/>
<dbReference type="InParanoid" id="Q9LYC5"/>
<dbReference type="OMA" id="TRLGCAN"/>
<dbReference type="OrthoDB" id="418495at2759"/>
<dbReference type="PhylomeDB" id="Q9LYC5"/>
<dbReference type="PRO" id="PR:Q9LYC5"/>
<dbReference type="Proteomes" id="UP000006548">
    <property type="component" value="Chromosome 3"/>
</dbReference>
<dbReference type="ExpressionAtlas" id="Q9LYC5">
    <property type="expression patterns" value="baseline and differential"/>
</dbReference>
<dbReference type="GO" id="GO:0005737">
    <property type="term" value="C:cytoplasm"/>
    <property type="evidence" value="ECO:0007669"/>
    <property type="project" value="UniProtKB-SubCell"/>
</dbReference>
<dbReference type="CDD" id="cd03419">
    <property type="entry name" value="GRX_GRXh_1_2_like"/>
    <property type="match status" value="1"/>
</dbReference>
<dbReference type="FunFam" id="3.40.30.10:FF:000028">
    <property type="entry name" value="Glutaredoxin family protein"/>
    <property type="match status" value="1"/>
</dbReference>
<dbReference type="Gene3D" id="3.40.30.10">
    <property type="entry name" value="Glutaredoxin"/>
    <property type="match status" value="1"/>
</dbReference>
<dbReference type="InterPro" id="IPR011905">
    <property type="entry name" value="GlrX-like_pln_2"/>
</dbReference>
<dbReference type="InterPro" id="IPR002109">
    <property type="entry name" value="Glutaredoxin"/>
</dbReference>
<dbReference type="InterPro" id="IPR014025">
    <property type="entry name" value="Glutaredoxin_subgr"/>
</dbReference>
<dbReference type="InterPro" id="IPR036249">
    <property type="entry name" value="Thioredoxin-like_sf"/>
</dbReference>
<dbReference type="NCBIfam" id="TIGR02189">
    <property type="entry name" value="GlrX-like_plant"/>
    <property type="match status" value="1"/>
</dbReference>
<dbReference type="PANTHER" id="PTHR10168">
    <property type="entry name" value="GLUTAREDOXIN"/>
    <property type="match status" value="1"/>
</dbReference>
<dbReference type="Pfam" id="PF00462">
    <property type="entry name" value="Glutaredoxin"/>
    <property type="match status" value="1"/>
</dbReference>
<dbReference type="PRINTS" id="PR00160">
    <property type="entry name" value="GLUTAREDOXIN"/>
</dbReference>
<dbReference type="SUPFAM" id="SSF52833">
    <property type="entry name" value="Thioredoxin-like"/>
    <property type="match status" value="1"/>
</dbReference>
<dbReference type="PROSITE" id="PS51354">
    <property type="entry name" value="GLUTAREDOXIN_2"/>
    <property type="match status" value="1"/>
</dbReference>